<geneLocation type="cyanelle"/>
<sequence>MSSKTDEILEQLKGLTLIEAADLVKAIEEAFGVDASAPVGGGMVMMAPAAGGGADAAEEKSAFDLVLEEVPADKKIAVLKVVRSLTNLGLKEAKDLVEATPKVVKEGASKDELKQLKKNLKQLEQK</sequence>
<protein>
    <recommendedName>
        <fullName evidence="2">Large ribosomal subunit protein bL12c</fullName>
    </recommendedName>
    <alternativeName>
        <fullName>50S ribosomal protein L12, cyanelle</fullName>
    </alternativeName>
</protein>
<comment type="function">
    <text evidence="1">Forms part of the ribosomal stalk which helps the ribosome interact with GTP-bound translation factors. Is thus essential for accurate translation.</text>
</comment>
<comment type="subunit">
    <text evidence="1">Homodimer. Part of the ribosomal stalk of the 50S ribosomal subunit. Forms a multimeric L10(L12)X complex, where L10 forms an elongated spine to which 2 to 4 L12 dimers bind in a sequential fashion. Binds GTP-bound translation factors.</text>
</comment>
<comment type="subcellular location">
    <subcellularLocation>
        <location>Plastid</location>
        <location>Cyanelle</location>
    </subcellularLocation>
</comment>
<comment type="similarity">
    <text evidence="1">Belongs to the bacterial ribosomal protein bL12 family.</text>
</comment>
<reference key="1">
    <citation type="journal article" date="1995" name="Plant Mol. Biol. Rep.">
        <title>Nucleotide sequence of the cyanelle DNA from Cyanophora paradoxa.</title>
        <authorList>
            <person name="Stirewalt V.L."/>
            <person name="Michalowski C.B."/>
            <person name="Loeffelhardt W."/>
            <person name="Bohnert H.J."/>
            <person name="Bryant D.A."/>
        </authorList>
    </citation>
    <scope>NUCLEOTIDE SEQUENCE [LARGE SCALE GENOMIC DNA]</scope>
    <source>
        <strain>UTEX LB 555 / Pringsheim</strain>
    </source>
</reference>
<reference key="2">
    <citation type="book" date="1997" name="Eukaryotism and symbiosis">
        <title>The complete sequence of the cyanelle genome of Cyanophora paradoxa: the genetic complexity of a primitive plastid.</title>
        <editorList>
            <person name="Schenk H.E.A."/>
            <person name="Herrmann R."/>
            <person name="Jeon K.W."/>
            <person name="Mueller N.E."/>
            <person name="Schwemmler W."/>
        </editorList>
        <authorList>
            <person name="Loeffelhardt W."/>
            <person name="Stirewalt V.L."/>
            <person name="Michalowski C.B."/>
            <person name="Annarella M."/>
            <person name="Farley J.Y."/>
            <person name="Schluchter W.M."/>
            <person name="Chung S."/>
            <person name="Newmann-Spallart C."/>
            <person name="Steiner J.M."/>
            <person name="Jakowitsch J."/>
            <person name="Bohnert H.J."/>
            <person name="Bryant D.A."/>
        </authorList>
    </citation>
    <scope>NUCLEOTIDE SEQUENCE [LARGE SCALE GENOMIC DNA]</scope>
    <source>
        <strain>UTEX LB 555 / Pringsheim</strain>
    </source>
</reference>
<feature type="chain" id="PRO_0000157612" description="Large ribosomal subunit protein bL12c">
    <location>
        <begin position="1"/>
        <end position="126"/>
    </location>
</feature>
<evidence type="ECO:0000255" key="1">
    <source>
        <dbReference type="HAMAP-Rule" id="MF_00368"/>
    </source>
</evidence>
<evidence type="ECO:0000305" key="2"/>
<gene>
    <name evidence="1" type="primary">rpl12</name>
    <name type="synonym">rpl7</name>
</gene>
<keyword id="KW-0194">Cyanelle</keyword>
<keyword id="KW-0934">Plastid</keyword>
<keyword id="KW-0687">Ribonucleoprotein</keyword>
<keyword id="KW-0689">Ribosomal protein</keyword>
<organism>
    <name type="scientific">Cyanophora paradoxa</name>
    <dbReference type="NCBI Taxonomy" id="2762"/>
    <lineage>
        <taxon>Eukaryota</taxon>
        <taxon>Glaucocystophyceae</taxon>
        <taxon>Cyanophoraceae</taxon>
        <taxon>Cyanophora</taxon>
    </lineage>
</organism>
<accession>P48124</accession>
<dbReference type="EMBL" id="U30821">
    <property type="protein sequence ID" value="AAA81204.1"/>
    <property type="molecule type" value="Genomic_DNA"/>
</dbReference>
<dbReference type="PIR" id="T06861">
    <property type="entry name" value="T06861"/>
</dbReference>
<dbReference type="RefSeq" id="NP_043173.1">
    <property type="nucleotide sequence ID" value="NC_001675.1"/>
</dbReference>
<dbReference type="SMR" id="P48124"/>
<dbReference type="GeneID" id="801504"/>
<dbReference type="GO" id="GO:0009842">
    <property type="term" value="C:cyanelle"/>
    <property type="evidence" value="ECO:0007669"/>
    <property type="project" value="UniProtKB-SubCell"/>
</dbReference>
<dbReference type="GO" id="GO:0022625">
    <property type="term" value="C:cytosolic large ribosomal subunit"/>
    <property type="evidence" value="ECO:0007669"/>
    <property type="project" value="TreeGrafter"/>
</dbReference>
<dbReference type="GO" id="GO:0003729">
    <property type="term" value="F:mRNA binding"/>
    <property type="evidence" value="ECO:0007669"/>
    <property type="project" value="TreeGrafter"/>
</dbReference>
<dbReference type="GO" id="GO:0003735">
    <property type="term" value="F:structural constituent of ribosome"/>
    <property type="evidence" value="ECO:0007669"/>
    <property type="project" value="InterPro"/>
</dbReference>
<dbReference type="GO" id="GO:0006412">
    <property type="term" value="P:translation"/>
    <property type="evidence" value="ECO:0007669"/>
    <property type="project" value="InterPro"/>
</dbReference>
<dbReference type="CDD" id="cd00387">
    <property type="entry name" value="Ribosomal_L7_L12"/>
    <property type="match status" value="1"/>
</dbReference>
<dbReference type="Gene3D" id="3.30.1390.10">
    <property type="match status" value="1"/>
</dbReference>
<dbReference type="Gene3D" id="1.20.5.710">
    <property type="entry name" value="Single helix bin"/>
    <property type="match status" value="1"/>
</dbReference>
<dbReference type="HAMAP" id="MF_00368">
    <property type="entry name" value="Ribosomal_bL12"/>
    <property type="match status" value="1"/>
</dbReference>
<dbReference type="InterPro" id="IPR000206">
    <property type="entry name" value="Ribosomal_bL12"/>
</dbReference>
<dbReference type="InterPro" id="IPR013823">
    <property type="entry name" value="Ribosomal_bL12_C"/>
</dbReference>
<dbReference type="InterPro" id="IPR014719">
    <property type="entry name" value="Ribosomal_bL12_C/ClpS-like"/>
</dbReference>
<dbReference type="InterPro" id="IPR008932">
    <property type="entry name" value="Ribosomal_bL12_oligo"/>
</dbReference>
<dbReference type="InterPro" id="IPR036235">
    <property type="entry name" value="Ribosomal_bL12_oligo_N_sf"/>
</dbReference>
<dbReference type="NCBIfam" id="TIGR00855">
    <property type="entry name" value="L12"/>
    <property type="match status" value="1"/>
</dbReference>
<dbReference type="PANTHER" id="PTHR45987">
    <property type="entry name" value="39S RIBOSOMAL PROTEIN L12"/>
    <property type="match status" value="1"/>
</dbReference>
<dbReference type="PANTHER" id="PTHR45987:SF4">
    <property type="entry name" value="LARGE RIBOSOMAL SUBUNIT PROTEIN BL12M"/>
    <property type="match status" value="1"/>
</dbReference>
<dbReference type="Pfam" id="PF00542">
    <property type="entry name" value="Ribosomal_L12"/>
    <property type="match status" value="1"/>
</dbReference>
<dbReference type="Pfam" id="PF16320">
    <property type="entry name" value="Ribosomal_L12_N"/>
    <property type="match status" value="1"/>
</dbReference>
<dbReference type="SUPFAM" id="SSF54736">
    <property type="entry name" value="ClpS-like"/>
    <property type="match status" value="1"/>
</dbReference>
<dbReference type="SUPFAM" id="SSF48300">
    <property type="entry name" value="Ribosomal protein L7/12, oligomerisation (N-terminal) domain"/>
    <property type="match status" value="1"/>
</dbReference>
<proteinExistence type="inferred from homology"/>
<name>RK12_CYAPA</name>